<protein>
    <recommendedName>
        <fullName evidence="1">Hydroxyethylthiazole kinase</fullName>
        <ecNumber evidence="1">2.7.1.50</ecNumber>
    </recommendedName>
    <alternativeName>
        <fullName evidence="1">4-methyl-5-beta-hydroxyethylthiazole kinase</fullName>
        <shortName evidence="1">TH kinase</shortName>
        <shortName evidence="1">Thz kinase</shortName>
    </alternativeName>
</protein>
<feature type="chain" id="PRO_1000100424" description="Hydroxyethylthiazole kinase">
    <location>
        <begin position="1"/>
        <end position="265"/>
    </location>
</feature>
<feature type="binding site" evidence="1">
    <location>
        <position position="50"/>
    </location>
    <ligand>
        <name>substrate</name>
    </ligand>
</feature>
<feature type="binding site" evidence="1">
    <location>
        <position position="125"/>
    </location>
    <ligand>
        <name>ATP</name>
        <dbReference type="ChEBI" id="CHEBI:30616"/>
    </ligand>
</feature>
<feature type="binding site" evidence="1">
    <location>
        <position position="171"/>
    </location>
    <ligand>
        <name>ATP</name>
        <dbReference type="ChEBI" id="CHEBI:30616"/>
    </ligand>
</feature>
<feature type="binding site" evidence="1">
    <location>
        <position position="198"/>
    </location>
    <ligand>
        <name>substrate</name>
    </ligand>
</feature>
<proteinExistence type="inferred from homology"/>
<comment type="function">
    <text evidence="1">Catalyzes the phosphorylation of the hydroxyl group of 4-methyl-5-beta-hydroxyethylthiazole (THZ).</text>
</comment>
<comment type="catalytic activity">
    <reaction evidence="1">
        <text>5-(2-hydroxyethyl)-4-methylthiazole + ATP = 4-methyl-5-(2-phosphooxyethyl)-thiazole + ADP + H(+)</text>
        <dbReference type="Rhea" id="RHEA:24212"/>
        <dbReference type="ChEBI" id="CHEBI:15378"/>
        <dbReference type="ChEBI" id="CHEBI:17957"/>
        <dbReference type="ChEBI" id="CHEBI:30616"/>
        <dbReference type="ChEBI" id="CHEBI:58296"/>
        <dbReference type="ChEBI" id="CHEBI:456216"/>
        <dbReference type="EC" id="2.7.1.50"/>
    </reaction>
</comment>
<comment type="cofactor">
    <cofactor evidence="1">
        <name>Mg(2+)</name>
        <dbReference type="ChEBI" id="CHEBI:18420"/>
    </cofactor>
</comment>
<comment type="pathway">
    <text evidence="1">Cofactor biosynthesis; thiamine diphosphate biosynthesis; 4-methyl-5-(2-phosphoethyl)-thiazole from 5-(2-hydroxyethyl)-4-methylthiazole: step 1/1.</text>
</comment>
<comment type="similarity">
    <text evidence="1">Belongs to the Thz kinase family.</text>
</comment>
<keyword id="KW-0067">ATP-binding</keyword>
<keyword id="KW-0418">Kinase</keyword>
<keyword id="KW-0460">Magnesium</keyword>
<keyword id="KW-0479">Metal-binding</keyword>
<keyword id="KW-0547">Nucleotide-binding</keyword>
<keyword id="KW-0784">Thiamine biosynthesis</keyword>
<keyword id="KW-0808">Transferase</keyword>
<dbReference type="EC" id="2.7.1.50" evidence="1"/>
<dbReference type="EMBL" id="FM200053">
    <property type="protein sequence ID" value="CAR58795.1"/>
    <property type="molecule type" value="Genomic_DNA"/>
</dbReference>
<dbReference type="RefSeq" id="WP_001182160.1">
    <property type="nucleotide sequence ID" value="NC_011147.1"/>
</dbReference>
<dbReference type="SMR" id="B5BF36"/>
<dbReference type="KEGG" id="sek:SSPA0664"/>
<dbReference type="HOGENOM" id="CLU_019943_0_1_6"/>
<dbReference type="UniPathway" id="UPA00060">
    <property type="reaction ID" value="UER00139"/>
</dbReference>
<dbReference type="Proteomes" id="UP000001869">
    <property type="component" value="Chromosome"/>
</dbReference>
<dbReference type="GO" id="GO:0005524">
    <property type="term" value="F:ATP binding"/>
    <property type="evidence" value="ECO:0007669"/>
    <property type="project" value="UniProtKB-UniRule"/>
</dbReference>
<dbReference type="GO" id="GO:0004417">
    <property type="term" value="F:hydroxyethylthiazole kinase activity"/>
    <property type="evidence" value="ECO:0007669"/>
    <property type="project" value="UniProtKB-UniRule"/>
</dbReference>
<dbReference type="GO" id="GO:0000287">
    <property type="term" value="F:magnesium ion binding"/>
    <property type="evidence" value="ECO:0007669"/>
    <property type="project" value="UniProtKB-UniRule"/>
</dbReference>
<dbReference type="GO" id="GO:0009228">
    <property type="term" value="P:thiamine biosynthetic process"/>
    <property type="evidence" value="ECO:0007669"/>
    <property type="project" value="UniProtKB-KW"/>
</dbReference>
<dbReference type="GO" id="GO:0009229">
    <property type="term" value="P:thiamine diphosphate biosynthetic process"/>
    <property type="evidence" value="ECO:0007669"/>
    <property type="project" value="UniProtKB-UniRule"/>
</dbReference>
<dbReference type="CDD" id="cd01170">
    <property type="entry name" value="THZ_kinase"/>
    <property type="match status" value="1"/>
</dbReference>
<dbReference type="FunFam" id="3.40.1190.20:FF:000015">
    <property type="entry name" value="Hydroxyethylthiazole kinase"/>
    <property type="match status" value="1"/>
</dbReference>
<dbReference type="Gene3D" id="3.40.1190.20">
    <property type="match status" value="1"/>
</dbReference>
<dbReference type="HAMAP" id="MF_00228">
    <property type="entry name" value="Thz_kinase"/>
    <property type="match status" value="1"/>
</dbReference>
<dbReference type="InterPro" id="IPR000417">
    <property type="entry name" value="Hyethyz_kinase"/>
</dbReference>
<dbReference type="InterPro" id="IPR029056">
    <property type="entry name" value="Ribokinase-like"/>
</dbReference>
<dbReference type="NCBIfam" id="NF006830">
    <property type="entry name" value="PRK09355.1"/>
    <property type="match status" value="1"/>
</dbReference>
<dbReference type="NCBIfam" id="TIGR00694">
    <property type="entry name" value="thiM"/>
    <property type="match status" value="1"/>
</dbReference>
<dbReference type="Pfam" id="PF02110">
    <property type="entry name" value="HK"/>
    <property type="match status" value="1"/>
</dbReference>
<dbReference type="PIRSF" id="PIRSF000513">
    <property type="entry name" value="Thz_kinase"/>
    <property type="match status" value="1"/>
</dbReference>
<dbReference type="PRINTS" id="PR01099">
    <property type="entry name" value="HYETHTZKNASE"/>
</dbReference>
<dbReference type="SUPFAM" id="SSF53613">
    <property type="entry name" value="Ribokinase-like"/>
    <property type="match status" value="1"/>
</dbReference>
<sequence>MQPDLHCRTLAAHTLKHFRALSPLTHCMTNDVVQTFTANTLLALGASPAMVIDPVEARPFAAIANALLINVGTLTASRADAMRAAVESAYDAKTPWTLDPVAVGVLEFRRRFCLDLLSLRPAAIRGNASEILALAGMALGGRGVDTTEAALAALPAAQALARQIDCIVVVTGEIDYVTNSQRTLSIPGGDPLMTRIVGTGCALSAVVAASCALPGAALDNVASACCWMKLAGQAAAERSEGPGSFIPAFLDALYHLDVEAANATN</sequence>
<evidence type="ECO:0000255" key="1">
    <source>
        <dbReference type="HAMAP-Rule" id="MF_00228"/>
    </source>
</evidence>
<name>THIM_SALPK</name>
<accession>B5BF36</accession>
<reference key="1">
    <citation type="journal article" date="2009" name="BMC Genomics">
        <title>Pseudogene accumulation in the evolutionary histories of Salmonella enterica serovars Paratyphi A and Typhi.</title>
        <authorList>
            <person name="Holt K.E."/>
            <person name="Thomson N.R."/>
            <person name="Wain J."/>
            <person name="Langridge G.C."/>
            <person name="Hasan R."/>
            <person name="Bhutta Z.A."/>
            <person name="Quail M.A."/>
            <person name="Norbertczak H."/>
            <person name="Walker D."/>
            <person name="Simmonds M."/>
            <person name="White B."/>
            <person name="Bason N."/>
            <person name="Mungall K."/>
            <person name="Dougan G."/>
            <person name="Parkhill J."/>
        </authorList>
    </citation>
    <scope>NUCLEOTIDE SEQUENCE [LARGE SCALE GENOMIC DNA]</scope>
    <source>
        <strain>AKU_12601</strain>
    </source>
</reference>
<organism>
    <name type="scientific">Salmonella paratyphi A (strain AKU_12601)</name>
    <dbReference type="NCBI Taxonomy" id="554290"/>
    <lineage>
        <taxon>Bacteria</taxon>
        <taxon>Pseudomonadati</taxon>
        <taxon>Pseudomonadota</taxon>
        <taxon>Gammaproteobacteria</taxon>
        <taxon>Enterobacterales</taxon>
        <taxon>Enterobacteriaceae</taxon>
        <taxon>Salmonella</taxon>
    </lineage>
</organism>
<gene>
    <name evidence="1" type="primary">thiM</name>
    <name type="ordered locus">SSPA0664</name>
</gene>